<reference key="1">
    <citation type="submission" date="2007-11" db="EMBL/GenBank/DDBJ databases">
        <authorList>
            <consortium name="The Salmonella enterica serovar Arizonae Genome Sequencing Project"/>
            <person name="McClelland M."/>
            <person name="Sanderson E.K."/>
            <person name="Porwollik S."/>
            <person name="Spieth J."/>
            <person name="Clifton W.S."/>
            <person name="Fulton R."/>
            <person name="Chunyan W."/>
            <person name="Wollam A."/>
            <person name="Shah N."/>
            <person name="Pepin K."/>
            <person name="Bhonagiri V."/>
            <person name="Nash W."/>
            <person name="Johnson M."/>
            <person name="Thiruvilangam P."/>
            <person name="Wilson R."/>
        </authorList>
    </citation>
    <scope>NUCLEOTIDE SEQUENCE [LARGE SCALE GENOMIC DNA]</scope>
    <source>
        <strain>ATCC BAA-731 / CDC346-86 / RSK2980</strain>
    </source>
</reference>
<protein>
    <recommendedName>
        <fullName evidence="1">NADH-quinone oxidoreductase subunit B</fullName>
        <ecNumber evidence="1">7.1.1.-</ecNumber>
    </recommendedName>
    <alternativeName>
        <fullName evidence="1">NADH dehydrogenase I subunit B</fullName>
    </alternativeName>
    <alternativeName>
        <fullName evidence="1">NDH-1 subunit B</fullName>
    </alternativeName>
</protein>
<keyword id="KW-0004">4Fe-4S</keyword>
<keyword id="KW-0997">Cell inner membrane</keyword>
<keyword id="KW-1003">Cell membrane</keyword>
<keyword id="KW-0408">Iron</keyword>
<keyword id="KW-0411">Iron-sulfur</keyword>
<keyword id="KW-0472">Membrane</keyword>
<keyword id="KW-0479">Metal-binding</keyword>
<keyword id="KW-0520">NAD</keyword>
<keyword id="KW-0874">Quinone</keyword>
<keyword id="KW-1185">Reference proteome</keyword>
<keyword id="KW-1278">Translocase</keyword>
<keyword id="KW-0813">Transport</keyword>
<keyword id="KW-0830">Ubiquinone</keyword>
<evidence type="ECO:0000255" key="1">
    <source>
        <dbReference type="HAMAP-Rule" id="MF_01356"/>
    </source>
</evidence>
<proteinExistence type="inferred from homology"/>
<sequence length="220" mass="25089">MDYTLTRIDPNGENDRYPLQKQEIVTDPLEQEVNKNVFMGKLHDMVNWGRKNSIWPYNFGLSCCYVEMVTSFTAVHDVARFGAEVLRASPRQADLMVVAGTCFTKMAPVIQRLYDQMLEPKWVISMGACANSGGMYDIYSVVQGVDKFIPVDVYIPGCPPRPEAYMQALMLLQESIGKERRPLSWVVGDQGVYRANMQPERERKRGERIAVTNLRTPDEI</sequence>
<accession>A9MJ98</accession>
<organism>
    <name type="scientific">Salmonella arizonae (strain ATCC BAA-731 / CDC346-86 / RSK2980)</name>
    <dbReference type="NCBI Taxonomy" id="41514"/>
    <lineage>
        <taxon>Bacteria</taxon>
        <taxon>Pseudomonadati</taxon>
        <taxon>Pseudomonadota</taxon>
        <taxon>Gammaproteobacteria</taxon>
        <taxon>Enterobacterales</taxon>
        <taxon>Enterobacteriaceae</taxon>
        <taxon>Salmonella</taxon>
    </lineage>
</organism>
<comment type="function">
    <text evidence="1">NDH-1 shuttles electrons from NADH, via FMN and iron-sulfur (Fe-S) centers, to quinones in the respiratory chain. The immediate electron acceptor for the enzyme in this species is believed to be ubiquinone. Couples the redox reaction to proton translocation (for every two electrons transferred, four hydrogen ions are translocated across the cytoplasmic membrane), and thus conserves the redox energy in a proton gradient.</text>
</comment>
<comment type="catalytic activity">
    <reaction evidence="1">
        <text>a quinone + NADH + 5 H(+)(in) = a quinol + NAD(+) + 4 H(+)(out)</text>
        <dbReference type="Rhea" id="RHEA:57888"/>
        <dbReference type="ChEBI" id="CHEBI:15378"/>
        <dbReference type="ChEBI" id="CHEBI:24646"/>
        <dbReference type="ChEBI" id="CHEBI:57540"/>
        <dbReference type="ChEBI" id="CHEBI:57945"/>
        <dbReference type="ChEBI" id="CHEBI:132124"/>
    </reaction>
</comment>
<comment type="cofactor">
    <cofactor evidence="1">
        <name>[4Fe-4S] cluster</name>
        <dbReference type="ChEBI" id="CHEBI:49883"/>
    </cofactor>
    <text evidence="1">Binds 1 [4Fe-4S] cluster.</text>
</comment>
<comment type="subunit">
    <text evidence="1">NDH-1 is composed of 13 different subunits. Subunits NuoB, CD, E, F, and G constitute the peripheral sector of the complex.</text>
</comment>
<comment type="subcellular location">
    <subcellularLocation>
        <location evidence="1">Cell inner membrane</location>
        <topology evidence="1">Peripheral membrane protein</topology>
        <orientation evidence="1">Cytoplasmic side</orientation>
    </subcellularLocation>
</comment>
<comment type="similarity">
    <text evidence="1">Belongs to the complex I 20 kDa subunit family.</text>
</comment>
<gene>
    <name evidence="1" type="primary">nuoB</name>
    <name type="ordered locus">SARI_00572</name>
</gene>
<dbReference type="EC" id="7.1.1.-" evidence="1"/>
<dbReference type="EMBL" id="CP000880">
    <property type="protein sequence ID" value="ABX20498.1"/>
    <property type="molecule type" value="Genomic_DNA"/>
</dbReference>
<dbReference type="SMR" id="A9MJ98"/>
<dbReference type="STRING" id="41514.SARI_00572"/>
<dbReference type="KEGG" id="ses:SARI_00572"/>
<dbReference type="HOGENOM" id="CLU_055737_7_3_6"/>
<dbReference type="Proteomes" id="UP000002084">
    <property type="component" value="Chromosome"/>
</dbReference>
<dbReference type="GO" id="GO:0005886">
    <property type="term" value="C:plasma membrane"/>
    <property type="evidence" value="ECO:0007669"/>
    <property type="project" value="UniProtKB-SubCell"/>
</dbReference>
<dbReference type="GO" id="GO:0045271">
    <property type="term" value="C:respiratory chain complex I"/>
    <property type="evidence" value="ECO:0007669"/>
    <property type="project" value="TreeGrafter"/>
</dbReference>
<dbReference type="GO" id="GO:0051539">
    <property type="term" value="F:4 iron, 4 sulfur cluster binding"/>
    <property type="evidence" value="ECO:0007669"/>
    <property type="project" value="UniProtKB-KW"/>
</dbReference>
<dbReference type="GO" id="GO:0005506">
    <property type="term" value="F:iron ion binding"/>
    <property type="evidence" value="ECO:0007669"/>
    <property type="project" value="UniProtKB-UniRule"/>
</dbReference>
<dbReference type="GO" id="GO:0008137">
    <property type="term" value="F:NADH dehydrogenase (ubiquinone) activity"/>
    <property type="evidence" value="ECO:0007669"/>
    <property type="project" value="InterPro"/>
</dbReference>
<dbReference type="GO" id="GO:0050136">
    <property type="term" value="F:NADH:ubiquinone reductase (non-electrogenic) activity"/>
    <property type="evidence" value="ECO:0007669"/>
    <property type="project" value="UniProtKB-UniRule"/>
</dbReference>
<dbReference type="GO" id="GO:0048038">
    <property type="term" value="F:quinone binding"/>
    <property type="evidence" value="ECO:0007669"/>
    <property type="project" value="UniProtKB-KW"/>
</dbReference>
<dbReference type="GO" id="GO:0009060">
    <property type="term" value="P:aerobic respiration"/>
    <property type="evidence" value="ECO:0007669"/>
    <property type="project" value="TreeGrafter"/>
</dbReference>
<dbReference type="GO" id="GO:0015990">
    <property type="term" value="P:electron transport coupled proton transport"/>
    <property type="evidence" value="ECO:0007669"/>
    <property type="project" value="TreeGrafter"/>
</dbReference>
<dbReference type="FunFam" id="3.40.50.12280:FF:000002">
    <property type="entry name" value="NADH-quinone oxidoreductase subunit B"/>
    <property type="match status" value="1"/>
</dbReference>
<dbReference type="Gene3D" id="3.40.50.12280">
    <property type="match status" value="1"/>
</dbReference>
<dbReference type="HAMAP" id="MF_01356">
    <property type="entry name" value="NDH1_NuoB"/>
    <property type="match status" value="1"/>
</dbReference>
<dbReference type="InterPro" id="IPR006137">
    <property type="entry name" value="NADH_UbQ_OxRdtase-like_20kDa"/>
</dbReference>
<dbReference type="InterPro" id="IPR006138">
    <property type="entry name" value="NADH_UQ_OxRdtase_20Kd_su"/>
</dbReference>
<dbReference type="NCBIfam" id="TIGR01957">
    <property type="entry name" value="nuoB_fam"/>
    <property type="match status" value="1"/>
</dbReference>
<dbReference type="NCBIfam" id="NF005012">
    <property type="entry name" value="PRK06411.1"/>
    <property type="match status" value="1"/>
</dbReference>
<dbReference type="PANTHER" id="PTHR11995">
    <property type="entry name" value="NADH DEHYDROGENASE"/>
    <property type="match status" value="1"/>
</dbReference>
<dbReference type="PANTHER" id="PTHR11995:SF14">
    <property type="entry name" value="NADH DEHYDROGENASE [UBIQUINONE] IRON-SULFUR PROTEIN 7, MITOCHONDRIAL"/>
    <property type="match status" value="1"/>
</dbReference>
<dbReference type="Pfam" id="PF01058">
    <property type="entry name" value="Oxidored_q6"/>
    <property type="match status" value="1"/>
</dbReference>
<dbReference type="SUPFAM" id="SSF56770">
    <property type="entry name" value="HydA/Nqo6-like"/>
    <property type="match status" value="1"/>
</dbReference>
<dbReference type="PROSITE" id="PS01150">
    <property type="entry name" value="COMPLEX1_20K"/>
    <property type="match status" value="1"/>
</dbReference>
<name>NUOB_SALAR</name>
<feature type="chain" id="PRO_0000376360" description="NADH-quinone oxidoreductase subunit B">
    <location>
        <begin position="1"/>
        <end position="220"/>
    </location>
</feature>
<feature type="binding site" evidence="1">
    <location>
        <position position="63"/>
    </location>
    <ligand>
        <name>[4Fe-4S] cluster</name>
        <dbReference type="ChEBI" id="CHEBI:49883"/>
    </ligand>
</feature>
<feature type="binding site" evidence="1">
    <location>
        <position position="64"/>
    </location>
    <ligand>
        <name>[4Fe-4S] cluster</name>
        <dbReference type="ChEBI" id="CHEBI:49883"/>
    </ligand>
</feature>
<feature type="binding site" evidence="1">
    <location>
        <position position="129"/>
    </location>
    <ligand>
        <name>[4Fe-4S] cluster</name>
        <dbReference type="ChEBI" id="CHEBI:49883"/>
    </ligand>
</feature>
<feature type="binding site" evidence="1">
    <location>
        <position position="158"/>
    </location>
    <ligand>
        <name>[4Fe-4S] cluster</name>
        <dbReference type="ChEBI" id="CHEBI:49883"/>
    </ligand>
</feature>